<protein>
    <recommendedName>
        <fullName evidence="1">Quinolinate synthase</fullName>
        <ecNumber evidence="1">2.5.1.72</ecNumber>
    </recommendedName>
</protein>
<keyword id="KW-0004">4Fe-4S</keyword>
<keyword id="KW-0963">Cytoplasm</keyword>
<keyword id="KW-0408">Iron</keyword>
<keyword id="KW-0411">Iron-sulfur</keyword>
<keyword id="KW-0479">Metal-binding</keyword>
<keyword id="KW-0662">Pyridine nucleotide biosynthesis</keyword>
<keyword id="KW-1185">Reference proteome</keyword>
<keyword id="KW-0808">Transferase</keyword>
<evidence type="ECO:0000255" key="1">
    <source>
        <dbReference type="HAMAP-Rule" id="MF_00567"/>
    </source>
</evidence>
<accession>Q2SCM1</accession>
<feature type="chain" id="PRO_1000129419" description="Quinolinate synthase">
    <location>
        <begin position="1"/>
        <end position="353"/>
    </location>
</feature>
<feature type="binding site" evidence="1">
    <location>
        <position position="49"/>
    </location>
    <ligand>
        <name>iminosuccinate</name>
        <dbReference type="ChEBI" id="CHEBI:77875"/>
    </ligand>
</feature>
<feature type="binding site" evidence="1">
    <location>
        <position position="70"/>
    </location>
    <ligand>
        <name>iminosuccinate</name>
        <dbReference type="ChEBI" id="CHEBI:77875"/>
    </ligand>
</feature>
<feature type="binding site" evidence="1">
    <location>
        <position position="115"/>
    </location>
    <ligand>
        <name>[4Fe-4S] cluster</name>
        <dbReference type="ChEBI" id="CHEBI:49883"/>
    </ligand>
</feature>
<feature type="binding site" evidence="1">
    <location>
        <begin position="141"/>
        <end position="143"/>
    </location>
    <ligand>
        <name>iminosuccinate</name>
        <dbReference type="ChEBI" id="CHEBI:77875"/>
    </ligand>
</feature>
<feature type="binding site" evidence="1">
    <location>
        <position position="158"/>
    </location>
    <ligand>
        <name>iminosuccinate</name>
        <dbReference type="ChEBI" id="CHEBI:77875"/>
    </ligand>
</feature>
<feature type="binding site" evidence="1">
    <location>
        <position position="202"/>
    </location>
    <ligand>
        <name>[4Fe-4S] cluster</name>
        <dbReference type="ChEBI" id="CHEBI:49883"/>
    </ligand>
</feature>
<feature type="binding site" evidence="1">
    <location>
        <begin position="228"/>
        <end position="230"/>
    </location>
    <ligand>
        <name>iminosuccinate</name>
        <dbReference type="ChEBI" id="CHEBI:77875"/>
    </ligand>
</feature>
<feature type="binding site" evidence="1">
    <location>
        <position position="245"/>
    </location>
    <ligand>
        <name>iminosuccinate</name>
        <dbReference type="ChEBI" id="CHEBI:77875"/>
    </ligand>
</feature>
<feature type="binding site" evidence="1">
    <location>
        <position position="299"/>
    </location>
    <ligand>
        <name>[4Fe-4S] cluster</name>
        <dbReference type="ChEBI" id="CHEBI:49883"/>
    </ligand>
</feature>
<gene>
    <name evidence="1" type="primary">nadA</name>
    <name type="ordered locus">HCH_04912</name>
</gene>
<reference key="1">
    <citation type="journal article" date="2005" name="Nucleic Acids Res.">
        <title>Genomic blueprint of Hahella chejuensis, a marine microbe producing an algicidal agent.</title>
        <authorList>
            <person name="Jeong H."/>
            <person name="Yim J.H."/>
            <person name="Lee C."/>
            <person name="Choi S.-H."/>
            <person name="Park Y.K."/>
            <person name="Yoon S.H."/>
            <person name="Hur C.-G."/>
            <person name="Kang H.-Y."/>
            <person name="Kim D."/>
            <person name="Lee H.H."/>
            <person name="Park K.H."/>
            <person name="Park S.-H."/>
            <person name="Park H.-S."/>
            <person name="Lee H.K."/>
            <person name="Oh T.K."/>
            <person name="Kim J.F."/>
        </authorList>
    </citation>
    <scope>NUCLEOTIDE SEQUENCE [LARGE SCALE GENOMIC DNA]</scope>
    <source>
        <strain>KCTC 2396</strain>
    </source>
</reference>
<name>NADA_HAHCH</name>
<comment type="function">
    <text evidence="1">Catalyzes the condensation of iminoaspartate with dihydroxyacetone phosphate to form quinolinate.</text>
</comment>
<comment type="catalytic activity">
    <reaction evidence="1">
        <text>iminosuccinate + dihydroxyacetone phosphate = quinolinate + phosphate + 2 H2O + H(+)</text>
        <dbReference type="Rhea" id="RHEA:25888"/>
        <dbReference type="ChEBI" id="CHEBI:15377"/>
        <dbReference type="ChEBI" id="CHEBI:15378"/>
        <dbReference type="ChEBI" id="CHEBI:29959"/>
        <dbReference type="ChEBI" id="CHEBI:43474"/>
        <dbReference type="ChEBI" id="CHEBI:57642"/>
        <dbReference type="ChEBI" id="CHEBI:77875"/>
        <dbReference type="EC" id="2.5.1.72"/>
    </reaction>
    <physiologicalReaction direction="left-to-right" evidence="1">
        <dbReference type="Rhea" id="RHEA:25889"/>
    </physiologicalReaction>
</comment>
<comment type="cofactor">
    <cofactor evidence="1">
        <name>[4Fe-4S] cluster</name>
        <dbReference type="ChEBI" id="CHEBI:49883"/>
    </cofactor>
    <text evidence="1">Binds 1 [4Fe-4S] cluster per subunit.</text>
</comment>
<comment type="pathway">
    <text evidence="1">Cofactor biosynthesis; NAD(+) biosynthesis; quinolinate from iminoaspartate: step 1/1.</text>
</comment>
<comment type="subcellular location">
    <subcellularLocation>
        <location evidence="1">Cytoplasm</location>
    </subcellularLocation>
</comment>
<comment type="similarity">
    <text evidence="1">Belongs to the quinolinate synthase family. Type 1 subfamily.</text>
</comment>
<proteinExistence type="inferred from homology"/>
<dbReference type="EC" id="2.5.1.72" evidence="1"/>
<dbReference type="EMBL" id="CP000155">
    <property type="protein sequence ID" value="ABC31603.1"/>
    <property type="molecule type" value="Genomic_DNA"/>
</dbReference>
<dbReference type="RefSeq" id="WP_011398668.1">
    <property type="nucleotide sequence ID" value="NC_007645.1"/>
</dbReference>
<dbReference type="SMR" id="Q2SCM1"/>
<dbReference type="STRING" id="349521.HCH_04912"/>
<dbReference type="KEGG" id="hch:HCH_04912"/>
<dbReference type="eggNOG" id="COG0379">
    <property type="taxonomic scope" value="Bacteria"/>
</dbReference>
<dbReference type="HOGENOM" id="CLU_047382_1_0_6"/>
<dbReference type="OrthoDB" id="9801204at2"/>
<dbReference type="UniPathway" id="UPA00253">
    <property type="reaction ID" value="UER00327"/>
</dbReference>
<dbReference type="Proteomes" id="UP000000238">
    <property type="component" value="Chromosome"/>
</dbReference>
<dbReference type="GO" id="GO:0005829">
    <property type="term" value="C:cytosol"/>
    <property type="evidence" value="ECO:0007669"/>
    <property type="project" value="TreeGrafter"/>
</dbReference>
<dbReference type="GO" id="GO:0051539">
    <property type="term" value="F:4 iron, 4 sulfur cluster binding"/>
    <property type="evidence" value="ECO:0007669"/>
    <property type="project" value="UniProtKB-KW"/>
</dbReference>
<dbReference type="GO" id="GO:0046872">
    <property type="term" value="F:metal ion binding"/>
    <property type="evidence" value="ECO:0007669"/>
    <property type="project" value="UniProtKB-KW"/>
</dbReference>
<dbReference type="GO" id="GO:0008987">
    <property type="term" value="F:quinolinate synthetase A activity"/>
    <property type="evidence" value="ECO:0007669"/>
    <property type="project" value="UniProtKB-UniRule"/>
</dbReference>
<dbReference type="GO" id="GO:0034628">
    <property type="term" value="P:'de novo' NAD biosynthetic process from L-aspartate"/>
    <property type="evidence" value="ECO:0007669"/>
    <property type="project" value="TreeGrafter"/>
</dbReference>
<dbReference type="FunFam" id="3.40.50.10800:FF:000003">
    <property type="entry name" value="Quinolinate synthase A"/>
    <property type="match status" value="1"/>
</dbReference>
<dbReference type="Gene3D" id="3.40.50.10800">
    <property type="entry name" value="NadA-like"/>
    <property type="match status" value="3"/>
</dbReference>
<dbReference type="HAMAP" id="MF_00567">
    <property type="entry name" value="NadA_type1"/>
    <property type="match status" value="1"/>
</dbReference>
<dbReference type="InterPro" id="IPR003473">
    <property type="entry name" value="NadA"/>
</dbReference>
<dbReference type="InterPro" id="IPR036094">
    <property type="entry name" value="NadA_sf"/>
</dbReference>
<dbReference type="InterPro" id="IPR023513">
    <property type="entry name" value="Quinolinate_synth_A_type1"/>
</dbReference>
<dbReference type="NCBIfam" id="TIGR00550">
    <property type="entry name" value="nadA"/>
    <property type="match status" value="1"/>
</dbReference>
<dbReference type="NCBIfam" id="NF006877">
    <property type="entry name" value="PRK09375.1-1"/>
    <property type="match status" value="1"/>
</dbReference>
<dbReference type="NCBIfam" id="NF006878">
    <property type="entry name" value="PRK09375.1-2"/>
    <property type="match status" value="1"/>
</dbReference>
<dbReference type="PANTHER" id="PTHR30573:SF0">
    <property type="entry name" value="QUINOLINATE SYNTHASE, CHLOROPLASTIC"/>
    <property type="match status" value="1"/>
</dbReference>
<dbReference type="PANTHER" id="PTHR30573">
    <property type="entry name" value="QUINOLINATE SYNTHETASE A"/>
    <property type="match status" value="1"/>
</dbReference>
<dbReference type="Pfam" id="PF02445">
    <property type="entry name" value="NadA"/>
    <property type="match status" value="1"/>
</dbReference>
<dbReference type="SUPFAM" id="SSF142754">
    <property type="entry name" value="NadA-like"/>
    <property type="match status" value="1"/>
</dbReference>
<sequence length="353" mass="38835">MSAISDRIFVQEHLAREHEASELSPEEAERLKAEIKELLVQEDAVLVAHYYTDPLLQALAEETGGCVADSLEMARFGNQHPASTLMVCGVRFMGETAKILNPEKTVLMPTLEATCSLDIGCPVEEFSAFCDEHSDRTVVVYANTSAAVKARADWVVTSSIALDIVEYLHERGEKIIWAPDKHLGGYVKNKTGADVLLWDGSCIVHEEFKSKGLSDLKQLYPDAAVLVHPESPEAVVEMADVVGSTSQLINAVKSMSNEQFIVATDAGIFYKMQQMAPEKTLIEAPTAGNGATCRSCAHCPWMAMNGLENLRDVLISKRQEIIVEADLREKALIPLQRMLNFSKERQMAVKGNA</sequence>
<organism>
    <name type="scientific">Hahella chejuensis (strain KCTC 2396)</name>
    <dbReference type="NCBI Taxonomy" id="349521"/>
    <lineage>
        <taxon>Bacteria</taxon>
        <taxon>Pseudomonadati</taxon>
        <taxon>Pseudomonadota</taxon>
        <taxon>Gammaproteobacteria</taxon>
        <taxon>Oceanospirillales</taxon>
        <taxon>Hahellaceae</taxon>
        <taxon>Hahella</taxon>
    </lineage>
</organism>